<organism>
    <name type="scientific">Rickettsia bellii (strain OSU 85-389)</name>
    <dbReference type="NCBI Taxonomy" id="391896"/>
    <lineage>
        <taxon>Bacteria</taxon>
        <taxon>Pseudomonadati</taxon>
        <taxon>Pseudomonadota</taxon>
        <taxon>Alphaproteobacteria</taxon>
        <taxon>Rickettsiales</taxon>
        <taxon>Rickettsiaceae</taxon>
        <taxon>Rickettsieae</taxon>
        <taxon>Rickettsia</taxon>
        <taxon>belli group</taxon>
    </lineage>
</organism>
<name>IF2_RICB8</name>
<accession>A8GW31</accession>
<keyword id="KW-0963">Cytoplasm</keyword>
<keyword id="KW-0342">GTP-binding</keyword>
<keyword id="KW-0396">Initiation factor</keyword>
<keyword id="KW-0547">Nucleotide-binding</keyword>
<keyword id="KW-0648">Protein biosynthesis</keyword>
<reference key="1">
    <citation type="submission" date="2007-09" db="EMBL/GenBank/DDBJ databases">
        <title>Complete genome sequencing of Rickettsia bellii.</title>
        <authorList>
            <person name="Madan A."/>
            <person name="Lee H."/>
            <person name="Madan A."/>
            <person name="Yoon J.-G."/>
            <person name="Ryu G.-Y."/>
            <person name="Dasch G."/>
            <person name="Ereemeva M."/>
        </authorList>
    </citation>
    <scope>NUCLEOTIDE SEQUENCE [LARGE SCALE GENOMIC DNA]</scope>
    <source>
        <strain>OSU 85-389</strain>
    </source>
</reference>
<proteinExistence type="inferred from homology"/>
<comment type="function">
    <text evidence="2">One of the essential components for the initiation of protein synthesis. Protects formylmethionyl-tRNA from spontaneous hydrolysis and promotes its binding to the 30S ribosomal subunits. Also involved in the hydrolysis of GTP during the formation of the 70S ribosomal complex.</text>
</comment>
<comment type="subcellular location">
    <subcellularLocation>
        <location evidence="2">Cytoplasm</location>
    </subcellularLocation>
</comment>
<comment type="similarity">
    <text evidence="2">Belongs to the TRAFAC class translation factor GTPase superfamily. Classic translation factor GTPase family. IF-2 subfamily.</text>
</comment>
<feature type="chain" id="PRO_1000008322" description="Translation initiation factor IF-2">
    <location>
        <begin position="1"/>
        <end position="828"/>
    </location>
</feature>
<feature type="domain" description="tr-type G">
    <location>
        <begin position="326"/>
        <end position="496"/>
    </location>
</feature>
<feature type="region of interest" description="Disordered" evidence="3">
    <location>
        <begin position="48"/>
        <end position="76"/>
    </location>
</feature>
<feature type="region of interest" description="Disordered" evidence="3">
    <location>
        <begin position="112"/>
        <end position="148"/>
    </location>
</feature>
<feature type="region of interest" description="G1" evidence="1">
    <location>
        <begin position="335"/>
        <end position="342"/>
    </location>
</feature>
<feature type="region of interest" description="G2" evidence="1">
    <location>
        <begin position="360"/>
        <end position="364"/>
    </location>
</feature>
<feature type="region of interest" description="G3" evidence="1">
    <location>
        <begin position="382"/>
        <end position="385"/>
    </location>
</feature>
<feature type="region of interest" description="G4" evidence="1">
    <location>
        <begin position="436"/>
        <end position="439"/>
    </location>
</feature>
<feature type="region of interest" description="G5" evidence="1">
    <location>
        <begin position="472"/>
        <end position="474"/>
    </location>
</feature>
<feature type="compositionally biased region" description="Polar residues" evidence="3">
    <location>
        <begin position="49"/>
        <end position="58"/>
    </location>
</feature>
<feature type="compositionally biased region" description="Low complexity" evidence="3">
    <location>
        <begin position="65"/>
        <end position="74"/>
    </location>
</feature>
<feature type="compositionally biased region" description="Acidic residues" evidence="3">
    <location>
        <begin position="116"/>
        <end position="126"/>
    </location>
</feature>
<feature type="compositionally biased region" description="Basic and acidic residues" evidence="3">
    <location>
        <begin position="127"/>
        <end position="144"/>
    </location>
</feature>
<feature type="binding site" evidence="2">
    <location>
        <begin position="335"/>
        <end position="342"/>
    </location>
    <ligand>
        <name>GTP</name>
        <dbReference type="ChEBI" id="CHEBI:37565"/>
    </ligand>
</feature>
<feature type="binding site" evidence="2">
    <location>
        <begin position="382"/>
        <end position="386"/>
    </location>
    <ligand>
        <name>GTP</name>
        <dbReference type="ChEBI" id="CHEBI:37565"/>
    </ligand>
</feature>
<feature type="binding site" evidence="2">
    <location>
        <begin position="436"/>
        <end position="439"/>
    </location>
    <ligand>
        <name>GTP</name>
        <dbReference type="ChEBI" id="CHEBI:37565"/>
    </ligand>
</feature>
<gene>
    <name evidence="2" type="primary">infB</name>
    <name type="ordered locus">A1I_03495</name>
</gene>
<dbReference type="EMBL" id="CP000849">
    <property type="protein sequence ID" value="ABV79058.1"/>
    <property type="molecule type" value="Genomic_DNA"/>
</dbReference>
<dbReference type="RefSeq" id="WP_012151818.1">
    <property type="nucleotide sequence ID" value="NC_009883.1"/>
</dbReference>
<dbReference type="SMR" id="A8GW31"/>
<dbReference type="KEGG" id="rbo:A1I_03495"/>
<dbReference type="HOGENOM" id="CLU_006301_10_2_5"/>
<dbReference type="GO" id="GO:0005737">
    <property type="term" value="C:cytoplasm"/>
    <property type="evidence" value="ECO:0007669"/>
    <property type="project" value="UniProtKB-SubCell"/>
</dbReference>
<dbReference type="GO" id="GO:0005525">
    <property type="term" value="F:GTP binding"/>
    <property type="evidence" value="ECO:0007669"/>
    <property type="project" value="UniProtKB-KW"/>
</dbReference>
<dbReference type="GO" id="GO:0003924">
    <property type="term" value="F:GTPase activity"/>
    <property type="evidence" value="ECO:0007669"/>
    <property type="project" value="UniProtKB-UniRule"/>
</dbReference>
<dbReference type="GO" id="GO:0097216">
    <property type="term" value="F:guanosine tetraphosphate binding"/>
    <property type="evidence" value="ECO:0007669"/>
    <property type="project" value="UniProtKB-ARBA"/>
</dbReference>
<dbReference type="GO" id="GO:0003743">
    <property type="term" value="F:translation initiation factor activity"/>
    <property type="evidence" value="ECO:0007669"/>
    <property type="project" value="UniProtKB-UniRule"/>
</dbReference>
<dbReference type="CDD" id="cd01887">
    <property type="entry name" value="IF2_eIF5B"/>
    <property type="match status" value="1"/>
</dbReference>
<dbReference type="CDD" id="cd03702">
    <property type="entry name" value="IF2_mtIF2_II"/>
    <property type="match status" value="1"/>
</dbReference>
<dbReference type="CDD" id="cd03692">
    <property type="entry name" value="mtIF2_IVc"/>
    <property type="match status" value="1"/>
</dbReference>
<dbReference type="FunFam" id="2.40.30.10:FF:000008">
    <property type="entry name" value="Translation initiation factor IF-2"/>
    <property type="match status" value="1"/>
</dbReference>
<dbReference type="FunFam" id="2.40.30.10:FF:000054">
    <property type="entry name" value="Translation initiation factor IF-2"/>
    <property type="match status" value="1"/>
</dbReference>
<dbReference type="FunFam" id="3.40.50.10050:FF:000001">
    <property type="entry name" value="Translation initiation factor IF-2"/>
    <property type="match status" value="1"/>
</dbReference>
<dbReference type="FunFam" id="3.40.50.300:FF:000019">
    <property type="entry name" value="Translation initiation factor IF-2"/>
    <property type="match status" value="1"/>
</dbReference>
<dbReference type="Gene3D" id="3.40.50.300">
    <property type="entry name" value="P-loop containing nucleotide triphosphate hydrolases"/>
    <property type="match status" value="1"/>
</dbReference>
<dbReference type="Gene3D" id="2.40.30.10">
    <property type="entry name" value="Translation factors"/>
    <property type="match status" value="2"/>
</dbReference>
<dbReference type="Gene3D" id="3.40.50.10050">
    <property type="entry name" value="Translation initiation factor IF- 2, domain 3"/>
    <property type="match status" value="1"/>
</dbReference>
<dbReference type="HAMAP" id="MF_00100_B">
    <property type="entry name" value="IF_2_B"/>
    <property type="match status" value="1"/>
</dbReference>
<dbReference type="InterPro" id="IPR053905">
    <property type="entry name" value="EF-G-like_DII"/>
</dbReference>
<dbReference type="InterPro" id="IPR004161">
    <property type="entry name" value="EFTu-like_2"/>
</dbReference>
<dbReference type="InterPro" id="IPR044145">
    <property type="entry name" value="IF2_II"/>
</dbReference>
<dbReference type="InterPro" id="IPR006847">
    <property type="entry name" value="IF2_N"/>
</dbReference>
<dbReference type="InterPro" id="IPR027417">
    <property type="entry name" value="P-loop_NTPase"/>
</dbReference>
<dbReference type="InterPro" id="IPR005225">
    <property type="entry name" value="Small_GTP-bd"/>
</dbReference>
<dbReference type="InterPro" id="IPR000795">
    <property type="entry name" value="T_Tr_GTP-bd_dom"/>
</dbReference>
<dbReference type="InterPro" id="IPR000178">
    <property type="entry name" value="TF_IF2_bacterial-like"/>
</dbReference>
<dbReference type="InterPro" id="IPR015760">
    <property type="entry name" value="TIF_IF2"/>
</dbReference>
<dbReference type="InterPro" id="IPR023115">
    <property type="entry name" value="TIF_IF2_dom3"/>
</dbReference>
<dbReference type="InterPro" id="IPR036925">
    <property type="entry name" value="TIF_IF2_dom3_sf"/>
</dbReference>
<dbReference type="InterPro" id="IPR009000">
    <property type="entry name" value="Transl_B-barrel_sf"/>
</dbReference>
<dbReference type="NCBIfam" id="TIGR00487">
    <property type="entry name" value="IF-2"/>
    <property type="match status" value="1"/>
</dbReference>
<dbReference type="NCBIfam" id="TIGR00231">
    <property type="entry name" value="small_GTP"/>
    <property type="match status" value="1"/>
</dbReference>
<dbReference type="PANTHER" id="PTHR43381:SF5">
    <property type="entry name" value="TR-TYPE G DOMAIN-CONTAINING PROTEIN"/>
    <property type="match status" value="1"/>
</dbReference>
<dbReference type="PANTHER" id="PTHR43381">
    <property type="entry name" value="TRANSLATION INITIATION FACTOR IF-2-RELATED"/>
    <property type="match status" value="1"/>
</dbReference>
<dbReference type="Pfam" id="PF22042">
    <property type="entry name" value="EF-G_D2"/>
    <property type="match status" value="1"/>
</dbReference>
<dbReference type="Pfam" id="PF00009">
    <property type="entry name" value="GTP_EFTU"/>
    <property type="match status" value="1"/>
</dbReference>
<dbReference type="Pfam" id="PF03144">
    <property type="entry name" value="GTP_EFTU_D2"/>
    <property type="match status" value="1"/>
</dbReference>
<dbReference type="Pfam" id="PF11987">
    <property type="entry name" value="IF-2"/>
    <property type="match status" value="1"/>
</dbReference>
<dbReference type="Pfam" id="PF04760">
    <property type="entry name" value="IF2_N"/>
    <property type="match status" value="1"/>
</dbReference>
<dbReference type="SUPFAM" id="SSF52156">
    <property type="entry name" value="Initiation factor IF2/eIF5b, domain 3"/>
    <property type="match status" value="1"/>
</dbReference>
<dbReference type="SUPFAM" id="SSF52540">
    <property type="entry name" value="P-loop containing nucleoside triphosphate hydrolases"/>
    <property type="match status" value="1"/>
</dbReference>
<dbReference type="SUPFAM" id="SSF50447">
    <property type="entry name" value="Translation proteins"/>
    <property type="match status" value="2"/>
</dbReference>
<dbReference type="PROSITE" id="PS51722">
    <property type="entry name" value="G_TR_2"/>
    <property type="match status" value="1"/>
</dbReference>
<dbReference type="PROSITE" id="PS01176">
    <property type="entry name" value="IF2"/>
    <property type="match status" value="1"/>
</dbReference>
<protein>
    <recommendedName>
        <fullName evidence="2">Translation initiation factor IF-2</fullName>
    </recommendedName>
</protein>
<sequence length="828" mass="90861">MTDNQENKPKKLTLSNTKLSLNKSFDSLASTQSFVNAKSKTLVEVRKSYSGSTTTLSLNKEKGSLETGSSSGSEEFNRRLSILKKAAEQSKLNDNSQISTLSKLASINQSIASQEDPIEVEQEESSDTNKVKEEPKIEEVKDIEESTLQTPKKKEDIFVKSPLVGTRTRYGIESEKTVDKVTENKVIAPKPKVEESRKFKKTDLFNMVGDDENDNRNRTRSLASIKRAREKEKRKSLVQVPEKVYREITLPEVIGVGDFANAMSERVSDVIKELMKLGILANASQTIDADTAELVATHLGHAVKRVQESDVENILITNDKEEDLRSRAPVVTVMGHVDHGKTSLLDALKSTDVASGETGGITQHIGAYRVTLADGRAITFIDTPGHEAFSEMRSRGAGVTDIVIIVVAADDGIKPQTVEAINHAKAANVPIIVAINKIDKPDIDIERIKNELYMYEIIGEEAGGDVMVIPISALKKINLDKLEEAILLIAEMQNLKASPFGSASGVVIESKIEKGRGALTTMLVQRGTLKSGDIIIAGTAYGKVKKMTNDKGIEVLEATPSVPIEIQGLSHVPHAGDMFNVVQTEKQAKDIAEYRERVAKEKKISIAPRSSLEDLFLKASGSSKIKELPLIIKGDVHGSVEAIAGSLLKLPNDEVKLRILHSGVGPITESDVSLAHASSAIIVGFNVRAGANAKTAAEKEKVEIRYYSIIYDLLDDVKAIMSGMLDPIIREQYIGSVEIRQIFNITKIGKIAGSYVTRGIIKKGAGVRLLRDNIVIHEGKLKTLKRFKEEVKEVREGYECGIAFENYEDIREGDTVEVFELIQEKKQL</sequence>
<evidence type="ECO:0000250" key="1"/>
<evidence type="ECO:0000255" key="2">
    <source>
        <dbReference type="HAMAP-Rule" id="MF_00100"/>
    </source>
</evidence>
<evidence type="ECO:0000256" key="3">
    <source>
        <dbReference type="SAM" id="MobiDB-lite"/>
    </source>
</evidence>